<accession>P82345</accession>
<gene>
    <name type="primary">hbb0</name>
</gene>
<sequence>VEWTDFERATIKDIFSKLEYDVVGPATLARCLVVYPWTQRYFAKFGNLYTATAIAENAMVSKHGITILHGLDRAVKNMDDIKNTYAELSVLHSEKLHVDPDNFKLLADCLTIVVAARFGSAFTGEVQAAFEKFMAVVVSSLGRQYH</sequence>
<dbReference type="SMR" id="P82345"/>
<dbReference type="GO" id="GO:0072562">
    <property type="term" value="C:blood microparticle"/>
    <property type="evidence" value="ECO:0007669"/>
    <property type="project" value="TreeGrafter"/>
</dbReference>
<dbReference type="GO" id="GO:0031838">
    <property type="term" value="C:haptoglobin-hemoglobin complex"/>
    <property type="evidence" value="ECO:0007669"/>
    <property type="project" value="TreeGrafter"/>
</dbReference>
<dbReference type="GO" id="GO:0005833">
    <property type="term" value="C:hemoglobin complex"/>
    <property type="evidence" value="ECO:0007669"/>
    <property type="project" value="InterPro"/>
</dbReference>
<dbReference type="GO" id="GO:0031720">
    <property type="term" value="F:haptoglobin binding"/>
    <property type="evidence" value="ECO:0007669"/>
    <property type="project" value="TreeGrafter"/>
</dbReference>
<dbReference type="GO" id="GO:0020037">
    <property type="term" value="F:heme binding"/>
    <property type="evidence" value="ECO:0007669"/>
    <property type="project" value="InterPro"/>
</dbReference>
<dbReference type="GO" id="GO:0046872">
    <property type="term" value="F:metal ion binding"/>
    <property type="evidence" value="ECO:0007669"/>
    <property type="project" value="UniProtKB-KW"/>
</dbReference>
<dbReference type="GO" id="GO:0043177">
    <property type="term" value="F:organic acid binding"/>
    <property type="evidence" value="ECO:0007669"/>
    <property type="project" value="TreeGrafter"/>
</dbReference>
<dbReference type="GO" id="GO:0019825">
    <property type="term" value="F:oxygen binding"/>
    <property type="evidence" value="ECO:0007669"/>
    <property type="project" value="InterPro"/>
</dbReference>
<dbReference type="GO" id="GO:0005344">
    <property type="term" value="F:oxygen carrier activity"/>
    <property type="evidence" value="ECO:0007669"/>
    <property type="project" value="UniProtKB-KW"/>
</dbReference>
<dbReference type="GO" id="GO:0004601">
    <property type="term" value="F:peroxidase activity"/>
    <property type="evidence" value="ECO:0007669"/>
    <property type="project" value="TreeGrafter"/>
</dbReference>
<dbReference type="GO" id="GO:0042744">
    <property type="term" value="P:hydrogen peroxide catabolic process"/>
    <property type="evidence" value="ECO:0007669"/>
    <property type="project" value="TreeGrafter"/>
</dbReference>
<dbReference type="CDD" id="cd08925">
    <property type="entry name" value="Hb-beta-like"/>
    <property type="match status" value="1"/>
</dbReference>
<dbReference type="FunFam" id="1.10.490.10:FF:000001">
    <property type="entry name" value="Hemoglobin subunit beta"/>
    <property type="match status" value="1"/>
</dbReference>
<dbReference type="Gene3D" id="1.10.490.10">
    <property type="entry name" value="Globins"/>
    <property type="match status" value="1"/>
</dbReference>
<dbReference type="InterPro" id="IPR000971">
    <property type="entry name" value="Globin"/>
</dbReference>
<dbReference type="InterPro" id="IPR009050">
    <property type="entry name" value="Globin-like_sf"/>
</dbReference>
<dbReference type="InterPro" id="IPR012292">
    <property type="entry name" value="Globin/Proto"/>
</dbReference>
<dbReference type="InterPro" id="IPR002337">
    <property type="entry name" value="Hemoglobin_b"/>
</dbReference>
<dbReference type="InterPro" id="IPR050056">
    <property type="entry name" value="Hemoglobin_oxygen_transport"/>
</dbReference>
<dbReference type="PANTHER" id="PTHR11442">
    <property type="entry name" value="HEMOGLOBIN FAMILY MEMBER"/>
    <property type="match status" value="1"/>
</dbReference>
<dbReference type="PANTHER" id="PTHR11442:SF7">
    <property type="entry name" value="HEMOGLOBIN SUBUNIT EPSILON"/>
    <property type="match status" value="1"/>
</dbReference>
<dbReference type="Pfam" id="PF00042">
    <property type="entry name" value="Globin"/>
    <property type="match status" value="1"/>
</dbReference>
<dbReference type="PRINTS" id="PR00814">
    <property type="entry name" value="BETAHAEM"/>
</dbReference>
<dbReference type="SUPFAM" id="SSF46458">
    <property type="entry name" value="Globin-like"/>
    <property type="match status" value="1"/>
</dbReference>
<dbReference type="PROSITE" id="PS01033">
    <property type="entry name" value="GLOBIN"/>
    <property type="match status" value="1"/>
</dbReference>
<name>HBB0_PAGBO</name>
<reference key="1">
    <citation type="journal article" date="2000" name="J. Fish Biol.">
        <title>Functionally distinct haemoglobins of the cryopelagic antarctic teleost Pagothenia borchgrevinki.</title>
        <authorList>
            <person name="Riccio A."/>
            <person name="Tamburrini M."/>
            <person name="Carratore V."/>
            <person name="di Prisco G."/>
        </authorList>
    </citation>
    <scope>PROTEIN SEQUENCE</scope>
    <source>
        <tissue>Blood</tissue>
    </source>
</reference>
<protein>
    <recommendedName>
        <fullName>Hemoglobin subunit beta-0</fullName>
    </recommendedName>
    <alternativeName>
        <fullName>Beta-0-globin</fullName>
    </alternativeName>
    <alternativeName>
        <fullName>Hb 0</fullName>
    </alternativeName>
    <alternativeName>
        <fullName>Hemoglobin beta-0 chain</fullName>
    </alternativeName>
</protein>
<evidence type="ECO:0000255" key="1">
    <source>
        <dbReference type="PROSITE-ProRule" id="PRU00238"/>
    </source>
</evidence>
<comment type="function">
    <text>Involved in oxygen transport from gills to the various peripheral tissues.</text>
</comment>
<comment type="subunit">
    <text>Heterotetramer of two alpha chains and two beta chains.</text>
</comment>
<comment type="tissue specificity">
    <text>Red blood cells.</text>
</comment>
<comment type="miscellaneous">
    <text>This fish has five hemoglobins: Hb C, Hb O, Hb 1, Hb 2 and Hb 3. Hb 0 presents the strongest Bohr effect while Hb 1 presents the weakest Bohr effect.</text>
</comment>
<comment type="similarity">
    <text evidence="1">Belongs to the globin family.</text>
</comment>
<keyword id="KW-0903">Direct protein sequencing</keyword>
<keyword id="KW-0349">Heme</keyword>
<keyword id="KW-0408">Iron</keyword>
<keyword id="KW-0479">Metal-binding</keyword>
<keyword id="KW-0561">Oxygen transport</keyword>
<keyword id="KW-0813">Transport</keyword>
<feature type="chain" id="PRO_0000053048" description="Hemoglobin subunit beta-0">
    <location>
        <begin position="1"/>
        <end position="146"/>
    </location>
</feature>
<feature type="domain" description="Globin" evidence="1">
    <location>
        <begin position="2"/>
        <end position="146"/>
    </location>
</feature>
<feature type="binding site" description="distal binding residue">
    <location>
        <position position="63"/>
    </location>
    <ligand>
        <name>heme b</name>
        <dbReference type="ChEBI" id="CHEBI:60344"/>
    </ligand>
    <ligandPart>
        <name>Fe</name>
        <dbReference type="ChEBI" id="CHEBI:18248"/>
    </ligandPart>
</feature>
<feature type="binding site" description="proximal binding residue">
    <location>
        <position position="92"/>
    </location>
    <ligand>
        <name>heme b</name>
        <dbReference type="ChEBI" id="CHEBI:60344"/>
    </ligand>
    <ligandPart>
        <name>Fe</name>
        <dbReference type="ChEBI" id="CHEBI:18248"/>
    </ligandPart>
</feature>
<organism>
    <name type="scientific">Pagothenia borchgrevinki</name>
    <name type="common">Bald rockcod</name>
    <name type="synonym">Trematomus borchgrevinki</name>
    <dbReference type="NCBI Taxonomy" id="8213"/>
    <lineage>
        <taxon>Eukaryota</taxon>
        <taxon>Metazoa</taxon>
        <taxon>Chordata</taxon>
        <taxon>Craniata</taxon>
        <taxon>Vertebrata</taxon>
        <taxon>Euteleostomi</taxon>
        <taxon>Actinopterygii</taxon>
        <taxon>Neopterygii</taxon>
        <taxon>Teleostei</taxon>
        <taxon>Neoteleostei</taxon>
        <taxon>Acanthomorphata</taxon>
        <taxon>Eupercaria</taxon>
        <taxon>Perciformes</taxon>
        <taxon>Notothenioidei</taxon>
        <taxon>Nototheniidae</taxon>
        <taxon>Pagothenia</taxon>
    </lineage>
</organism>
<proteinExistence type="evidence at protein level"/>